<geneLocation type="chloroplast"/>
<gene>
    <name evidence="1" type="primary">infA</name>
</gene>
<accession>P08698</accession>
<accession>Q9M3K0</accession>
<name>IF1C_SPIOL</name>
<organism>
    <name type="scientific">Spinacia oleracea</name>
    <name type="common">Spinach</name>
    <dbReference type="NCBI Taxonomy" id="3562"/>
    <lineage>
        <taxon>Eukaryota</taxon>
        <taxon>Viridiplantae</taxon>
        <taxon>Streptophyta</taxon>
        <taxon>Embryophyta</taxon>
        <taxon>Tracheophyta</taxon>
        <taxon>Spermatophyta</taxon>
        <taxon>Magnoliopsida</taxon>
        <taxon>eudicotyledons</taxon>
        <taxon>Gunneridae</taxon>
        <taxon>Pentapetalae</taxon>
        <taxon>Caryophyllales</taxon>
        <taxon>Chenopodiaceae</taxon>
        <taxon>Chenopodioideae</taxon>
        <taxon>Anserineae</taxon>
        <taxon>Spinacia</taxon>
    </lineage>
</organism>
<comment type="function">
    <text evidence="1">One of the essential components for the initiation of protein synthesis. Stabilizes the binding of IF-2 and IF-3 on the 30S subunit to which N-formylmethionyl-tRNA(fMet) subsequently binds. Helps modulate mRNA selection, yielding the 30S pre-initiation complex (PIC). Upon addition of the 50S ribosomal subunit IF-1, IF-2 and IF-3 are released leaving the mature 70S translation initiation complex.</text>
</comment>
<comment type="subunit">
    <text evidence="1">Component of the 30S ribosomal translation pre-initiation complex which assembles on the 30S ribosome in the order IF-2 and IF-3, IF-1 and N-formylmethionyl-tRNA(fMet); mRNA recruitment can occur at any time during PIC assembly.</text>
</comment>
<comment type="subcellular location">
    <subcellularLocation>
        <location evidence="1">Plastid</location>
        <location evidence="1">Chloroplast</location>
    </subcellularLocation>
</comment>
<comment type="similarity">
    <text evidence="1">Belongs to the IF-1 family.</text>
</comment>
<comment type="sequence caution" evidence="2">
    <conflict type="erroneous initiation">
        <sequence resource="EMBL-CDS" id="CAB88762"/>
    </conflict>
    <text>Truncated N-terminus.</text>
</comment>
<evidence type="ECO:0000255" key="1">
    <source>
        <dbReference type="HAMAP-Rule" id="MF_00075"/>
    </source>
</evidence>
<evidence type="ECO:0000305" key="2"/>
<sequence>MKEQKWIHEGLITESLPNGMFWVRLDNEDPILGYVSGRIRRSSIRILPGDRVKIEVSRYDSTRGRIIYRLRNKDSND</sequence>
<keyword id="KW-0150">Chloroplast</keyword>
<keyword id="KW-0396">Initiation factor</keyword>
<keyword id="KW-0934">Plastid</keyword>
<keyword id="KW-0648">Protein biosynthesis</keyword>
<keyword id="KW-1185">Reference proteome</keyword>
<keyword id="KW-0694">RNA-binding</keyword>
<keyword id="KW-0699">rRNA-binding</keyword>
<feature type="chain" id="PRO_0000095953" description="Translation initiation factor IF-1, chloroplastic">
    <location>
        <begin position="1"/>
        <end position="77"/>
    </location>
</feature>
<feature type="domain" description="S1-like" evidence="1">
    <location>
        <begin position="1"/>
        <end position="71"/>
    </location>
</feature>
<proteinExistence type="inferred from homology"/>
<reference key="1">
    <citation type="journal article" date="1986" name="Nucleic Acids Res.">
        <title>Spinach plastid genes coding for initiation factor IF-1, ribosomal protein S11 and RNA polymerase alpha-subunit.</title>
        <authorList>
            <person name="Sijben-Mueller G."/>
            <person name="Hallick R.B."/>
            <person name="Alt J."/>
            <person name="Westhoff P."/>
            <person name="Herrmann R.G."/>
        </authorList>
    </citation>
    <scope>NUCLEOTIDE SEQUENCE [GENOMIC DNA]</scope>
</reference>
<reference key="2">
    <citation type="journal article" date="2001" name="Plant Mol. Biol.">
        <title>The plastid chromosome of spinach (Spinacia oleracea): complete nucleotide sequence and gene organization.</title>
        <authorList>
            <person name="Schmitz-Linneweber C."/>
            <person name="Maier R.M."/>
            <person name="Alcaraz J.-P."/>
            <person name="Cottet A."/>
            <person name="Herrmann R.G."/>
            <person name="Mache R."/>
        </authorList>
    </citation>
    <scope>NUCLEOTIDE SEQUENCE [LARGE SCALE GENOMIC DNA]</scope>
    <source>
        <strain>cv. Geant d'hiver</strain>
        <strain>cv. Monatol</strain>
    </source>
</reference>
<protein>
    <recommendedName>
        <fullName evidence="1">Translation initiation factor IF-1, chloroplastic</fullName>
    </recommendedName>
</protein>
<dbReference type="EMBL" id="X03496">
    <property type="protein sequence ID" value="CAA27212.1"/>
    <property type="molecule type" value="Genomic_DNA"/>
</dbReference>
<dbReference type="EMBL" id="AJ400848">
    <property type="protein sequence ID" value="CAB88762.1"/>
    <property type="status" value="ALT_INIT"/>
    <property type="molecule type" value="Genomic_DNA"/>
</dbReference>
<dbReference type="PIR" id="A23525">
    <property type="entry name" value="A23525"/>
</dbReference>
<dbReference type="RefSeq" id="NP_054969.2">
    <property type="nucleotide sequence ID" value="NC_002202.1"/>
</dbReference>
<dbReference type="SMR" id="P08698"/>
<dbReference type="STRING" id="3562.P08698"/>
<dbReference type="GeneID" id="2715583"/>
<dbReference type="KEGG" id="soe:2715583"/>
<dbReference type="InParanoid" id="P08698"/>
<dbReference type="OrthoDB" id="1714886at2759"/>
<dbReference type="Proteomes" id="UP001155700">
    <property type="component" value="Chloroplast Pltd"/>
</dbReference>
<dbReference type="GO" id="GO:0009507">
    <property type="term" value="C:chloroplast"/>
    <property type="evidence" value="ECO:0007669"/>
    <property type="project" value="UniProtKB-SubCell"/>
</dbReference>
<dbReference type="GO" id="GO:0005829">
    <property type="term" value="C:cytosol"/>
    <property type="evidence" value="ECO:0000318"/>
    <property type="project" value="GO_Central"/>
</dbReference>
<dbReference type="GO" id="GO:0043022">
    <property type="term" value="F:ribosome binding"/>
    <property type="evidence" value="ECO:0000318"/>
    <property type="project" value="GO_Central"/>
</dbReference>
<dbReference type="GO" id="GO:0019843">
    <property type="term" value="F:rRNA binding"/>
    <property type="evidence" value="ECO:0007669"/>
    <property type="project" value="UniProtKB-UniRule"/>
</dbReference>
<dbReference type="GO" id="GO:0003743">
    <property type="term" value="F:translation initiation factor activity"/>
    <property type="evidence" value="ECO:0007669"/>
    <property type="project" value="UniProtKB-UniRule"/>
</dbReference>
<dbReference type="CDD" id="cd04451">
    <property type="entry name" value="S1_IF1"/>
    <property type="match status" value="1"/>
</dbReference>
<dbReference type="FunFam" id="2.40.50.140:FF:000019">
    <property type="entry name" value="Translation initiation factor IF-1, chloroplastic"/>
    <property type="match status" value="1"/>
</dbReference>
<dbReference type="Gene3D" id="2.40.50.140">
    <property type="entry name" value="Nucleic acid-binding proteins"/>
    <property type="match status" value="1"/>
</dbReference>
<dbReference type="HAMAP" id="MF_00075">
    <property type="entry name" value="IF_1"/>
    <property type="match status" value="1"/>
</dbReference>
<dbReference type="InterPro" id="IPR012340">
    <property type="entry name" value="NA-bd_OB-fold"/>
</dbReference>
<dbReference type="InterPro" id="IPR006196">
    <property type="entry name" value="RNA-binding_domain_S1_IF1"/>
</dbReference>
<dbReference type="InterPro" id="IPR003029">
    <property type="entry name" value="S1_domain"/>
</dbReference>
<dbReference type="InterPro" id="IPR004368">
    <property type="entry name" value="TIF_IF1"/>
</dbReference>
<dbReference type="NCBIfam" id="TIGR00008">
    <property type="entry name" value="infA"/>
    <property type="match status" value="1"/>
</dbReference>
<dbReference type="PANTHER" id="PTHR33370">
    <property type="entry name" value="TRANSLATION INITIATION FACTOR IF-1, CHLOROPLASTIC"/>
    <property type="match status" value="1"/>
</dbReference>
<dbReference type="PANTHER" id="PTHR33370:SF1">
    <property type="entry name" value="TRANSLATION INITIATION FACTOR IF-1, CHLOROPLASTIC"/>
    <property type="match status" value="1"/>
</dbReference>
<dbReference type="Pfam" id="PF01176">
    <property type="entry name" value="eIF-1a"/>
    <property type="match status" value="1"/>
</dbReference>
<dbReference type="SMART" id="SM00316">
    <property type="entry name" value="S1"/>
    <property type="match status" value="1"/>
</dbReference>
<dbReference type="SUPFAM" id="SSF50249">
    <property type="entry name" value="Nucleic acid-binding proteins"/>
    <property type="match status" value="1"/>
</dbReference>
<dbReference type="PROSITE" id="PS50832">
    <property type="entry name" value="S1_IF1_TYPE"/>
    <property type="match status" value="1"/>
</dbReference>